<sequence>SGKKVDAWMGIPYAQPPLGPLRFRHPRPAERWTGVLNATKPPNSCVQIVDTVFGDFPGATMWNPNTPLSEDCLYINVVVPRPRPKNAAVMLWIFGGGFYSGTATLDVYDHRTLASEENVIVVSLQYRVASLG</sequence>
<accession>Q867X3</accession>
<accession>Q867X5</accession>
<evidence type="ECO:0000250" key="1"/>
<evidence type="ECO:0000250" key="2">
    <source>
        <dbReference type="UniProtKB" id="P22303"/>
    </source>
</evidence>
<evidence type="ECO:0000255" key="3"/>
<evidence type="ECO:0000269" key="4">
    <source>
    </source>
</evidence>
<evidence type="ECO:0000305" key="5"/>
<evidence type="ECO:0000312" key="6">
    <source>
        <dbReference type="EMBL" id="CAD54760.1"/>
    </source>
</evidence>
<evidence type="ECO:0000312" key="7">
    <source>
        <dbReference type="EMBL" id="CAD54762.1"/>
    </source>
</evidence>
<evidence type="ECO:0000312" key="8">
    <source>
        <dbReference type="EMBL" id="CAD54767.1"/>
    </source>
</evidence>
<evidence type="ECO:0000312" key="9">
    <source>
        <dbReference type="EMBL" id="CAD54768.1"/>
    </source>
</evidence>
<evidence type="ECO:0000312" key="10">
    <source>
        <dbReference type="EMBL" id="CAD54771.1"/>
    </source>
</evidence>
<evidence type="ECO:0000312" key="11">
    <source>
        <dbReference type="EMBL" id="CAD54773.1"/>
    </source>
</evidence>
<evidence type="ECO:0000312" key="12">
    <source>
        <dbReference type="EMBL" id="CAD54774.1"/>
    </source>
</evidence>
<evidence type="ECO:0000312" key="13">
    <source>
        <dbReference type="EMBL" id="CAD54780.1"/>
    </source>
</evidence>
<evidence type="ECO:0000312" key="14">
    <source>
        <dbReference type="EMBL" id="CAD54781.1"/>
    </source>
</evidence>
<reference evidence="5" key="1">
    <citation type="journal article" date="2003" name="Nature">
        <title>Insecticide resistance in mosquito vectors.</title>
        <authorList>
            <person name="Weill M."/>
            <person name="Lutfalla G."/>
            <person name="Mogensen K."/>
            <person name="Chandre F."/>
            <person name="Berthomieu A."/>
            <person name="Berticat C."/>
            <person name="Pasteur N."/>
            <person name="Philips A."/>
            <person name="Fort P."/>
            <person name="Raymond M."/>
        </authorList>
    </citation>
    <scope>NUCLEOTIDE SEQUENCE [GENOMIC DNA]</scope>
    <source>
        <strain evidence="6">Barriol</strain>
        <strain evidence="7">Bleuet</strain>
        <strain evidence="8">BrugesA</strain>
        <strain evidence="9">BrugesB</strain>
        <strain evidence="10">Espro</strain>
        <strain evidence="11">Heteren</strain>
        <strain evidence="12">Killcare</strain>
        <strain evidence="13">Padova</strain>
        <strain evidence="14">Praias</strain>
    </source>
</reference>
<proteinExistence type="inferred from homology"/>
<gene>
    <name type="primary">ACE-1</name>
</gene>
<comment type="function">
    <text evidence="5">Rapidly hydrolyzes choline released into the synapse.</text>
</comment>
<comment type="catalytic activity">
    <reaction evidence="2">
        <text>acetylcholine + H2O = choline + acetate + H(+)</text>
        <dbReference type="Rhea" id="RHEA:17561"/>
        <dbReference type="ChEBI" id="CHEBI:15354"/>
        <dbReference type="ChEBI" id="CHEBI:15355"/>
        <dbReference type="ChEBI" id="CHEBI:15377"/>
        <dbReference type="ChEBI" id="CHEBI:15378"/>
        <dbReference type="ChEBI" id="CHEBI:30089"/>
        <dbReference type="EC" id="3.1.1.7"/>
    </reaction>
</comment>
<comment type="subcellular location">
    <subcellularLocation>
        <location evidence="1">Synapse</location>
    </subcellularLocation>
    <subcellularLocation>
        <location evidence="1">Secreted</location>
    </subcellularLocation>
    <subcellularLocation>
        <location evidence="1">Cell membrane</location>
        <topology evidence="1">Peripheral membrane protein</topology>
    </subcellularLocation>
</comment>
<comment type="polymorphism">
    <text evidence="4">A number of strains are susceptible to insecticides while others are resistant. Insensitivity to insecticides results from a loss of sensitivity of acetylcholinesterase to organophosphates and carbamates and is due to a variant at position 97.</text>
</comment>
<comment type="similarity">
    <text evidence="5">Belongs to the type-B carboxylesterase/lipase family.</text>
</comment>
<organism evidence="7">
    <name type="scientific">Culex pipiens pipiens</name>
    <name type="common">Northern house mosquito</name>
    <dbReference type="NCBI Taxonomy" id="38569"/>
    <lineage>
        <taxon>Eukaryota</taxon>
        <taxon>Metazoa</taxon>
        <taxon>Ecdysozoa</taxon>
        <taxon>Arthropoda</taxon>
        <taxon>Hexapoda</taxon>
        <taxon>Insecta</taxon>
        <taxon>Pterygota</taxon>
        <taxon>Neoptera</taxon>
        <taxon>Endopterygota</taxon>
        <taxon>Diptera</taxon>
        <taxon>Nematocera</taxon>
        <taxon>Culicoidea</taxon>
        <taxon>Culicidae</taxon>
        <taxon>Culicinae</taxon>
        <taxon>Culicini</taxon>
        <taxon>Culex</taxon>
        <taxon>Culex</taxon>
    </lineage>
</organism>
<feature type="chain" id="PRO_0000070280" description="Acetylcholinesterase">
    <location>
        <begin position="1" status="less than"/>
        <end position="132" status="greater than"/>
    </location>
</feature>
<feature type="glycosylation site" description="N-linked (GlcNAc...) asparagine" evidence="3">
    <location>
        <position position="37"/>
    </location>
</feature>
<feature type="disulfide bond" evidence="1">
    <location>
        <begin position="45"/>
        <end position="72"/>
    </location>
</feature>
<feature type="sequence variant" description="In strain: Barriol, Espro, Padova and Praias." evidence="4">
    <original>G</original>
    <variation>S</variation>
    <location>
        <position position="97"/>
    </location>
</feature>
<feature type="non-terminal residue" evidence="7">
    <location>
        <position position="1"/>
    </location>
</feature>
<feature type="non-terminal residue" evidence="7">
    <location>
        <position position="132"/>
    </location>
</feature>
<keyword id="KW-1003">Cell membrane</keyword>
<keyword id="KW-1015">Disulfide bond</keyword>
<keyword id="KW-0325">Glycoprotein</keyword>
<keyword id="KW-0378">Hydrolase</keyword>
<keyword id="KW-0472">Membrane</keyword>
<keyword id="KW-0531">Neurotransmitter degradation</keyword>
<keyword id="KW-0964">Secreted</keyword>
<keyword id="KW-0719">Serine esterase</keyword>
<keyword id="KW-0770">Synapse</keyword>
<protein>
    <recommendedName>
        <fullName>Acetylcholinesterase</fullName>
        <shortName>AChE</shortName>
        <ecNumber>3.1.1.7</ecNumber>
    </recommendedName>
</protein>
<dbReference type="EC" id="3.1.1.7"/>
<dbReference type="EMBL" id="AJ512688">
    <property type="protein sequence ID" value="CAD54760.1"/>
    <property type="molecule type" value="Genomic_DNA"/>
</dbReference>
<dbReference type="EMBL" id="AJ512690">
    <property type="protein sequence ID" value="CAD54762.1"/>
    <property type="molecule type" value="Genomic_DNA"/>
</dbReference>
<dbReference type="EMBL" id="AJ512695">
    <property type="protein sequence ID" value="CAD54767.1"/>
    <property type="molecule type" value="Genomic_DNA"/>
</dbReference>
<dbReference type="EMBL" id="AJ512696">
    <property type="protein sequence ID" value="CAD54768.1"/>
    <property type="molecule type" value="Genomic_DNA"/>
</dbReference>
<dbReference type="EMBL" id="AJ512699">
    <property type="protein sequence ID" value="CAD54771.1"/>
    <property type="molecule type" value="Genomic_DNA"/>
</dbReference>
<dbReference type="EMBL" id="AJ512701">
    <property type="protein sequence ID" value="CAD54773.1"/>
    <property type="molecule type" value="Genomic_DNA"/>
</dbReference>
<dbReference type="EMBL" id="AJ512702">
    <property type="protein sequence ID" value="CAD54774.1"/>
    <property type="molecule type" value="Genomic_DNA"/>
</dbReference>
<dbReference type="EMBL" id="AJ512708">
    <property type="protein sequence ID" value="CAD54780.1"/>
    <property type="molecule type" value="Genomic_DNA"/>
</dbReference>
<dbReference type="EMBL" id="AJ512709">
    <property type="protein sequence ID" value="CAD54781.1"/>
    <property type="molecule type" value="Genomic_DNA"/>
</dbReference>
<dbReference type="SMR" id="Q867X3"/>
<dbReference type="ESTHER" id="culpi-ACHE1">
    <property type="family name" value="ACHE"/>
</dbReference>
<dbReference type="GlyCosmos" id="Q867X3">
    <property type="glycosylation" value="1 site, No reported glycans"/>
</dbReference>
<dbReference type="GO" id="GO:0005615">
    <property type="term" value="C:extracellular space"/>
    <property type="evidence" value="ECO:0007669"/>
    <property type="project" value="TreeGrafter"/>
</dbReference>
<dbReference type="GO" id="GO:0005886">
    <property type="term" value="C:plasma membrane"/>
    <property type="evidence" value="ECO:0007669"/>
    <property type="project" value="UniProtKB-SubCell"/>
</dbReference>
<dbReference type="GO" id="GO:0045202">
    <property type="term" value="C:synapse"/>
    <property type="evidence" value="ECO:0007669"/>
    <property type="project" value="UniProtKB-SubCell"/>
</dbReference>
<dbReference type="GO" id="GO:0003990">
    <property type="term" value="F:acetylcholinesterase activity"/>
    <property type="evidence" value="ECO:0007669"/>
    <property type="project" value="UniProtKB-EC"/>
</dbReference>
<dbReference type="GO" id="GO:0006581">
    <property type="term" value="P:acetylcholine catabolic process"/>
    <property type="evidence" value="ECO:0007669"/>
    <property type="project" value="TreeGrafter"/>
</dbReference>
<dbReference type="GO" id="GO:0019695">
    <property type="term" value="P:choline metabolic process"/>
    <property type="evidence" value="ECO:0007669"/>
    <property type="project" value="TreeGrafter"/>
</dbReference>
<dbReference type="Gene3D" id="3.40.50.1820">
    <property type="entry name" value="alpha/beta hydrolase"/>
    <property type="match status" value="1"/>
</dbReference>
<dbReference type="InterPro" id="IPR029058">
    <property type="entry name" value="AB_hydrolase_fold"/>
</dbReference>
<dbReference type="InterPro" id="IPR050654">
    <property type="entry name" value="AChE-related_enzymes"/>
</dbReference>
<dbReference type="InterPro" id="IPR002018">
    <property type="entry name" value="CarbesteraseB"/>
</dbReference>
<dbReference type="InterPro" id="IPR019819">
    <property type="entry name" value="Carboxylesterase_B_CS"/>
</dbReference>
<dbReference type="InterPro" id="IPR000997">
    <property type="entry name" value="Cholinesterase"/>
</dbReference>
<dbReference type="PANTHER" id="PTHR43918">
    <property type="entry name" value="ACETYLCHOLINESTERASE"/>
    <property type="match status" value="1"/>
</dbReference>
<dbReference type="PANTHER" id="PTHR43918:SF12">
    <property type="entry name" value="ACETYLCHOLINESTERASE 1"/>
    <property type="match status" value="1"/>
</dbReference>
<dbReference type="Pfam" id="PF00135">
    <property type="entry name" value="COesterase"/>
    <property type="match status" value="1"/>
</dbReference>
<dbReference type="PRINTS" id="PR00878">
    <property type="entry name" value="CHOLNESTRASE"/>
</dbReference>
<dbReference type="SUPFAM" id="SSF53474">
    <property type="entry name" value="alpha/beta-Hydrolases"/>
    <property type="match status" value="1"/>
</dbReference>
<dbReference type="PROSITE" id="PS00941">
    <property type="entry name" value="CARBOXYLESTERASE_B_2"/>
    <property type="match status" value="1"/>
</dbReference>
<name>ACES_CULPP</name>